<gene>
    <name evidence="1" type="primary">rsmA</name>
    <name evidence="1" type="synonym">ksgA</name>
    <name type="ordered locus">BVU_1925</name>
</gene>
<feature type="chain" id="PRO_1000056595" description="Ribosomal RNA small subunit methyltransferase A">
    <location>
        <begin position="1"/>
        <end position="280"/>
    </location>
</feature>
<feature type="binding site" evidence="1">
    <location>
        <position position="13"/>
    </location>
    <ligand>
        <name>S-adenosyl-L-methionine</name>
        <dbReference type="ChEBI" id="CHEBI:59789"/>
    </ligand>
</feature>
<feature type="binding site" evidence="1">
    <location>
        <position position="15"/>
    </location>
    <ligand>
        <name>S-adenosyl-L-methionine</name>
        <dbReference type="ChEBI" id="CHEBI:59789"/>
    </ligand>
</feature>
<feature type="binding site" evidence="1">
    <location>
        <position position="40"/>
    </location>
    <ligand>
        <name>S-adenosyl-L-methionine</name>
        <dbReference type="ChEBI" id="CHEBI:59789"/>
    </ligand>
</feature>
<feature type="binding site" evidence="1">
    <location>
        <position position="61"/>
    </location>
    <ligand>
        <name>S-adenosyl-L-methionine</name>
        <dbReference type="ChEBI" id="CHEBI:59789"/>
    </ligand>
</feature>
<feature type="binding site" evidence="1">
    <location>
        <position position="85"/>
    </location>
    <ligand>
        <name>S-adenosyl-L-methionine</name>
        <dbReference type="ChEBI" id="CHEBI:59789"/>
    </ligand>
</feature>
<feature type="binding site" evidence="1">
    <location>
        <position position="105"/>
    </location>
    <ligand>
        <name>S-adenosyl-L-methionine</name>
        <dbReference type="ChEBI" id="CHEBI:59789"/>
    </ligand>
</feature>
<name>RSMA_PHOV8</name>
<comment type="function">
    <text evidence="1">Specifically dimethylates two adjacent adenosines (A1518 and A1519) in the loop of a conserved hairpin near the 3'-end of 16S rRNA in the 30S particle. May play a critical role in biogenesis of 30S subunits.</text>
</comment>
<comment type="catalytic activity">
    <reaction evidence="1">
        <text>adenosine(1518)/adenosine(1519) in 16S rRNA + 4 S-adenosyl-L-methionine = N(6)-dimethyladenosine(1518)/N(6)-dimethyladenosine(1519) in 16S rRNA + 4 S-adenosyl-L-homocysteine + 4 H(+)</text>
        <dbReference type="Rhea" id="RHEA:19609"/>
        <dbReference type="Rhea" id="RHEA-COMP:10232"/>
        <dbReference type="Rhea" id="RHEA-COMP:10233"/>
        <dbReference type="ChEBI" id="CHEBI:15378"/>
        <dbReference type="ChEBI" id="CHEBI:57856"/>
        <dbReference type="ChEBI" id="CHEBI:59789"/>
        <dbReference type="ChEBI" id="CHEBI:74411"/>
        <dbReference type="ChEBI" id="CHEBI:74493"/>
        <dbReference type="EC" id="2.1.1.182"/>
    </reaction>
</comment>
<comment type="subcellular location">
    <subcellularLocation>
        <location evidence="1">Cytoplasm</location>
    </subcellularLocation>
</comment>
<comment type="similarity">
    <text evidence="1">Belongs to the class I-like SAM-binding methyltransferase superfamily. rRNA adenine N(6)-methyltransferase family. RsmA subfamily.</text>
</comment>
<evidence type="ECO:0000255" key="1">
    <source>
        <dbReference type="HAMAP-Rule" id="MF_00607"/>
    </source>
</evidence>
<organism>
    <name type="scientific">Phocaeicola vulgatus (strain ATCC 8482 / DSM 1447 / JCM 5826 / CCUG 4940 / NBRC 14291 / NCTC 11154)</name>
    <name type="common">Bacteroides vulgatus</name>
    <dbReference type="NCBI Taxonomy" id="435590"/>
    <lineage>
        <taxon>Bacteria</taxon>
        <taxon>Pseudomonadati</taxon>
        <taxon>Bacteroidota</taxon>
        <taxon>Bacteroidia</taxon>
        <taxon>Bacteroidales</taxon>
        <taxon>Bacteroidaceae</taxon>
        <taxon>Phocaeicola</taxon>
    </lineage>
</organism>
<dbReference type="EC" id="2.1.1.182" evidence="1"/>
<dbReference type="EMBL" id="CP000139">
    <property type="protein sequence ID" value="ABR39598.1"/>
    <property type="molecule type" value="Genomic_DNA"/>
</dbReference>
<dbReference type="RefSeq" id="WP_005849048.1">
    <property type="nucleotide sequence ID" value="NZ_JANSWM010000118.1"/>
</dbReference>
<dbReference type="SMR" id="A6L1N4"/>
<dbReference type="STRING" id="435590.BVU_1925"/>
<dbReference type="PaxDb" id="435590-BVU_1925"/>
<dbReference type="GeneID" id="5302891"/>
<dbReference type="KEGG" id="bvu:BVU_1925"/>
<dbReference type="eggNOG" id="COG0030">
    <property type="taxonomic scope" value="Bacteria"/>
</dbReference>
<dbReference type="HOGENOM" id="CLU_041220_0_1_10"/>
<dbReference type="BioCyc" id="BVUL435590:G1G59-2014-MONOMER"/>
<dbReference type="Proteomes" id="UP000002861">
    <property type="component" value="Chromosome"/>
</dbReference>
<dbReference type="GO" id="GO:0005829">
    <property type="term" value="C:cytosol"/>
    <property type="evidence" value="ECO:0007669"/>
    <property type="project" value="TreeGrafter"/>
</dbReference>
<dbReference type="GO" id="GO:0052908">
    <property type="term" value="F:16S rRNA (adenine(1518)-N(6)/adenine(1519)-N(6))-dimethyltransferase activity"/>
    <property type="evidence" value="ECO:0007669"/>
    <property type="project" value="UniProtKB-EC"/>
</dbReference>
<dbReference type="GO" id="GO:0003723">
    <property type="term" value="F:RNA binding"/>
    <property type="evidence" value="ECO:0007669"/>
    <property type="project" value="UniProtKB-KW"/>
</dbReference>
<dbReference type="FunFam" id="1.10.8.100:FF:000001">
    <property type="entry name" value="Ribosomal RNA small subunit methyltransferase A"/>
    <property type="match status" value="1"/>
</dbReference>
<dbReference type="FunFam" id="3.40.50.150:FF:000157">
    <property type="entry name" value="Ribosomal RNA small subunit methyltransferase A"/>
    <property type="match status" value="1"/>
</dbReference>
<dbReference type="Gene3D" id="1.10.8.100">
    <property type="entry name" value="Ribosomal RNA adenine dimethylase-like, domain 2"/>
    <property type="match status" value="1"/>
</dbReference>
<dbReference type="Gene3D" id="3.40.50.150">
    <property type="entry name" value="Vaccinia Virus protein VP39"/>
    <property type="match status" value="1"/>
</dbReference>
<dbReference type="HAMAP" id="MF_00607">
    <property type="entry name" value="16SrRNA_methyltr_A"/>
    <property type="match status" value="1"/>
</dbReference>
<dbReference type="InterPro" id="IPR001737">
    <property type="entry name" value="KsgA/Erm"/>
</dbReference>
<dbReference type="InterPro" id="IPR023165">
    <property type="entry name" value="rRNA_Ade_diMease-like_C"/>
</dbReference>
<dbReference type="InterPro" id="IPR020596">
    <property type="entry name" value="rRNA_Ade_Mease_Trfase_CS"/>
</dbReference>
<dbReference type="InterPro" id="IPR020598">
    <property type="entry name" value="rRNA_Ade_methylase_Trfase_N"/>
</dbReference>
<dbReference type="InterPro" id="IPR011530">
    <property type="entry name" value="rRNA_adenine_dimethylase"/>
</dbReference>
<dbReference type="InterPro" id="IPR029063">
    <property type="entry name" value="SAM-dependent_MTases_sf"/>
</dbReference>
<dbReference type="NCBIfam" id="TIGR00755">
    <property type="entry name" value="ksgA"/>
    <property type="match status" value="1"/>
</dbReference>
<dbReference type="PANTHER" id="PTHR11727">
    <property type="entry name" value="DIMETHYLADENOSINE TRANSFERASE"/>
    <property type="match status" value="1"/>
</dbReference>
<dbReference type="PANTHER" id="PTHR11727:SF7">
    <property type="entry name" value="DIMETHYLADENOSINE TRANSFERASE-RELATED"/>
    <property type="match status" value="1"/>
</dbReference>
<dbReference type="Pfam" id="PF00398">
    <property type="entry name" value="RrnaAD"/>
    <property type="match status" value="1"/>
</dbReference>
<dbReference type="SMART" id="SM00650">
    <property type="entry name" value="rADc"/>
    <property type="match status" value="1"/>
</dbReference>
<dbReference type="SUPFAM" id="SSF53335">
    <property type="entry name" value="S-adenosyl-L-methionine-dependent methyltransferases"/>
    <property type="match status" value="1"/>
</dbReference>
<dbReference type="PROSITE" id="PS01131">
    <property type="entry name" value="RRNA_A_DIMETH"/>
    <property type="match status" value="1"/>
</dbReference>
<dbReference type="PROSITE" id="PS51689">
    <property type="entry name" value="SAM_RNA_A_N6_MT"/>
    <property type="match status" value="1"/>
</dbReference>
<proteinExistence type="inferred from homology"/>
<sequence length="280" mass="31909">MGLVKPKKFLGQHFLKDLSIAKDIADTVDVCPDLPILEVGPGMGVLTQFIMQKNRPVKVVELDYESVAYLRENFPALEDNIIEDDFLKLNLEKLFDGKPFVLTGNYPYNISSQIFFKMLDYKDLIPCCTGMIQKEVAERIAAGPGSKTYGILSILIQAWYKVEYLFTVHEHVFNPPPKVKSAVIRMTRNETTELGCNEKLFKLIVKTTFNQRRKTLRNSISSILDKENPLSADPIFNKRPEQLSVQEFIELTNQVEAALKNKTDIVYSNDIARKGTNKKE</sequence>
<protein>
    <recommendedName>
        <fullName evidence="1">Ribosomal RNA small subunit methyltransferase A</fullName>
        <ecNumber evidence="1">2.1.1.182</ecNumber>
    </recommendedName>
    <alternativeName>
        <fullName evidence="1">16S rRNA (adenine(1518)-N(6)/adenine(1519)-N(6))-dimethyltransferase</fullName>
    </alternativeName>
    <alternativeName>
        <fullName evidence="1">16S rRNA dimethyladenosine transferase</fullName>
    </alternativeName>
    <alternativeName>
        <fullName evidence="1">16S rRNA dimethylase</fullName>
    </alternativeName>
    <alternativeName>
        <fullName evidence="1">S-adenosylmethionine-6-N', N'-adenosyl(rRNA) dimethyltransferase</fullName>
    </alternativeName>
</protein>
<reference key="1">
    <citation type="journal article" date="2007" name="PLoS Biol.">
        <title>Evolution of symbiotic bacteria in the distal human intestine.</title>
        <authorList>
            <person name="Xu J."/>
            <person name="Mahowald M.A."/>
            <person name="Ley R.E."/>
            <person name="Lozupone C.A."/>
            <person name="Hamady M."/>
            <person name="Martens E.C."/>
            <person name="Henrissat B."/>
            <person name="Coutinho P.M."/>
            <person name="Minx P."/>
            <person name="Latreille P."/>
            <person name="Cordum H."/>
            <person name="Van Brunt A."/>
            <person name="Kim K."/>
            <person name="Fulton R.S."/>
            <person name="Fulton L.A."/>
            <person name="Clifton S.W."/>
            <person name="Wilson R.K."/>
            <person name="Knight R.D."/>
            <person name="Gordon J.I."/>
        </authorList>
    </citation>
    <scope>NUCLEOTIDE SEQUENCE [LARGE SCALE GENOMIC DNA]</scope>
    <source>
        <strain>ATCC 8482 / DSM 1447 / JCM 5826 / CCUG 4940 / NBRC 14291 / NCTC 11154</strain>
    </source>
</reference>
<keyword id="KW-0963">Cytoplasm</keyword>
<keyword id="KW-0489">Methyltransferase</keyword>
<keyword id="KW-0694">RNA-binding</keyword>
<keyword id="KW-0698">rRNA processing</keyword>
<keyword id="KW-0949">S-adenosyl-L-methionine</keyword>
<keyword id="KW-0808">Transferase</keyword>
<accession>A6L1N4</accession>